<evidence type="ECO:0000250" key="1">
    <source>
        <dbReference type="UniProtKB" id="O15260"/>
    </source>
</evidence>
<evidence type="ECO:0000255" key="2"/>
<evidence type="ECO:0000303" key="3">
    <source>
    </source>
</evidence>
<evidence type="ECO:0000305" key="4"/>
<evidence type="ECO:0000312" key="5">
    <source>
        <dbReference type="FlyBase" id="FBgn0019925"/>
    </source>
</evidence>
<comment type="function">
    <text evidence="1">Endoplasmic reticulum cargo receptor that mediates the export of lipoproteins by recruiting cargos into COPII vesicles to facilitate their secretion.</text>
</comment>
<comment type="subcellular location">
    <subcellularLocation>
        <location evidence="1">Endoplasmic reticulum membrane</location>
        <topology evidence="2">Multi-pass membrane protein</topology>
    </subcellularLocation>
</comment>
<comment type="domain">
    <text evidence="1">The di-lysine motif confers endoplasmic reticulum localization for type I membrane proteins.</text>
</comment>
<comment type="similarity">
    <text evidence="4">Belongs to the SURF4 family.</text>
</comment>
<dbReference type="EMBL" id="Y14823">
    <property type="protein sequence ID" value="CAA75100.1"/>
    <property type="molecule type" value="Genomic_DNA"/>
</dbReference>
<dbReference type="EMBL" id="AE014297">
    <property type="protein sequence ID" value="AAF55176.1"/>
    <property type="molecule type" value="Genomic_DNA"/>
</dbReference>
<dbReference type="EMBL" id="AY118406">
    <property type="protein sequence ID" value="AAM48435.1"/>
    <property type="molecule type" value="mRNA"/>
</dbReference>
<dbReference type="RefSeq" id="NP_477222.1">
    <property type="nucleotide sequence ID" value="NM_057874.5"/>
</dbReference>
<dbReference type="BioGRID" id="66927">
    <property type="interactions" value="44"/>
</dbReference>
<dbReference type="DIP" id="DIP-19105N"/>
<dbReference type="FunCoup" id="O18405">
    <property type="interactions" value="1795"/>
</dbReference>
<dbReference type="IntAct" id="O18405">
    <property type="interactions" value="40"/>
</dbReference>
<dbReference type="STRING" id="7227.FBpp0082571"/>
<dbReference type="PaxDb" id="7227-FBpp0082571"/>
<dbReference type="DNASU" id="41864"/>
<dbReference type="EnsemblMetazoa" id="FBtr0083117">
    <property type="protein sequence ID" value="FBpp0082571"/>
    <property type="gene ID" value="FBgn0019925"/>
</dbReference>
<dbReference type="GeneID" id="41864"/>
<dbReference type="KEGG" id="dme:Dmel_CG6202"/>
<dbReference type="AGR" id="FB:FBgn0019925"/>
<dbReference type="CTD" id="6836"/>
<dbReference type="FlyBase" id="FBgn0019925">
    <property type="gene designation" value="Surf4"/>
</dbReference>
<dbReference type="VEuPathDB" id="VectorBase:FBgn0019925"/>
<dbReference type="eggNOG" id="KOG3998">
    <property type="taxonomic scope" value="Eukaryota"/>
</dbReference>
<dbReference type="GeneTree" id="ENSGT00530000064123"/>
<dbReference type="HOGENOM" id="CLU_056195_2_0_1"/>
<dbReference type="InParanoid" id="O18405"/>
<dbReference type="OMA" id="RHRHFPW"/>
<dbReference type="OrthoDB" id="7859621at2759"/>
<dbReference type="PhylomeDB" id="O18405"/>
<dbReference type="Reactome" id="R-DME-6798695">
    <property type="pathway name" value="Neutrophil degranulation"/>
</dbReference>
<dbReference type="Reactome" id="R-DME-6811434">
    <property type="pathway name" value="COPI-dependent Golgi-to-ER retrograde traffic"/>
</dbReference>
<dbReference type="SignaLink" id="O18405"/>
<dbReference type="BioGRID-ORCS" id="41864">
    <property type="hits" value="0 hits in 1 CRISPR screen"/>
</dbReference>
<dbReference type="ChiTaRS" id="Surf4">
    <property type="organism name" value="fly"/>
</dbReference>
<dbReference type="GenomeRNAi" id="41864"/>
<dbReference type="PRO" id="PR:O18405"/>
<dbReference type="Proteomes" id="UP000000803">
    <property type="component" value="Chromosome 3R"/>
</dbReference>
<dbReference type="Bgee" id="FBgn0019925">
    <property type="expression patterns" value="Expressed in cleaving embryo and 217 other cell types or tissues"/>
</dbReference>
<dbReference type="GO" id="GO:0012505">
    <property type="term" value="C:endomembrane system"/>
    <property type="evidence" value="ECO:0007005"/>
    <property type="project" value="FlyBase"/>
</dbReference>
<dbReference type="GO" id="GO:0005783">
    <property type="term" value="C:endoplasmic reticulum"/>
    <property type="evidence" value="ECO:0000318"/>
    <property type="project" value="GO_Central"/>
</dbReference>
<dbReference type="GO" id="GO:0005789">
    <property type="term" value="C:endoplasmic reticulum membrane"/>
    <property type="evidence" value="ECO:0007669"/>
    <property type="project" value="UniProtKB-SubCell"/>
</dbReference>
<dbReference type="GO" id="GO:0005793">
    <property type="term" value="C:endoplasmic reticulum-Golgi intermediate compartment"/>
    <property type="evidence" value="ECO:0000318"/>
    <property type="project" value="GO_Central"/>
</dbReference>
<dbReference type="GO" id="GO:0045169">
    <property type="term" value="C:fusome"/>
    <property type="evidence" value="ECO:0000314"/>
    <property type="project" value="FlyBase"/>
</dbReference>
<dbReference type="GO" id="GO:0007030">
    <property type="term" value="P:Golgi organization"/>
    <property type="evidence" value="ECO:0000318"/>
    <property type="project" value="GO_Central"/>
</dbReference>
<dbReference type="GO" id="GO:0015031">
    <property type="term" value="P:protein transport"/>
    <property type="evidence" value="ECO:0007669"/>
    <property type="project" value="UniProtKB-KW"/>
</dbReference>
<dbReference type="InterPro" id="IPR045214">
    <property type="entry name" value="Surf1/Surf4"/>
</dbReference>
<dbReference type="InterPro" id="IPR002995">
    <property type="entry name" value="Surf4"/>
</dbReference>
<dbReference type="PANTHER" id="PTHR23427">
    <property type="entry name" value="SURFEIT LOCUS PROTEIN"/>
    <property type="match status" value="1"/>
</dbReference>
<dbReference type="PANTHER" id="PTHR23427:SF1">
    <property type="entry name" value="SURFEIT LOCUS PROTEIN 4"/>
    <property type="match status" value="1"/>
</dbReference>
<dbReference type="Pfam" id="PF02077">
    <property type="entry name" value="SURF4"/>
    <property type="match status" value="1"/>
</dbReference>
<dbReference type="PROSITE" id="PS01339">
    <property type="entry name" value="SURF4"/>
    <property type="match status" value="1"/>
</dbReference>
<sequence length="270" mass="30546">MSIPNEYIAKTEDVAEQVIKRGKNVLPTVARLCLIATFFEDGLRMYIQWNEQREYMDMSWGCGKFLATVFVLVNLLGQLGGCGMVMARFKVDIAVGLLFFIVVLQTVAYSILWDFQFLLRNFALIGALLLVLAEARIEGRSLFAGVPSMGENKPKNFMQLAGRILLAFMFITLIRFELSVWQVIQDIIGSILMVLVVLGYKTKLSALILVALLTILNLYHNAWWTIPSYKPLRDFLKYDFFQTLSVIGGLLMIVSLGPGGVSMDEHKKKW</sequence>
<proteinExistence type="evidence at transcript level"/>
<accession>O18405</accession>
<accession>A4V2Y8</accession>
<accession>Q9VF84</accession>
<protein>
    <recommendedName>
        <fullName evidence="4">Surfeit locus protein 4 homolog</fullName>
    </recommendedName>
</protein>
<organism>
    <name type="scientific">Drosophila melanogaster</name>
    <name type="common">Fruit fly</name>
    <dbReference type="NCBI Taxonomy" id="7227"/>
    <lineage>
        <taxon>Eukaryota</taxon>
        <taxon>Metazoa</taxon>
        <taxon>Ecdysozoa</taxon>
        <taxon>Arthropoda</taxon>
        <taxon>Hexapoda</taxon>
        <taxon>Insecta</taxon>
        <taxon>Pterygota</taxon>
        <taxon>Neoptera</taxon>
        <taxon>Endopterygota</taxon>
        <taxon>Diptera</taxon>
        <taxon>Brachycera</taxon>
        <taxon>Muscomorpha</taxon>
        <taxon>Ephydroidea</taxon>
        <taxon>Drosophilidae</taxon>
        <taxon>Drosophila</taxon>
        <taxon>Sophophora</taxon>
    </lineage>
</organism>
<keyword id="KW-0256">Endoplasmic reticulum</keyword>
<keyword id="KW-0472">Membrane</keyword>
<keyword id="KW-0653">Protein transport</keyword>
<keyword id="KW-1185">Reference proteome</keyword>
<keyword id="KW-0812">Transmembrane</keyword>
<keyword id="KW-1133">Transmembrane helix</keyword>
<keyword id="KW-0813">Transport</keyword>
<feature type="chain" id="PRO_0000127667" description="Surfeit locus protein 4 homolog">
    <location>
        <begin position="1"/>
        <end position="270"/>
    </location>
</feature>
<feature type="transmembrane region" description="Helical" evidence="2">
    <location>
        <begin position="65"/>
        <end position="85"/>
    </location>
</feature>
<feature type="transmembrane region" description="Helical" evidence="2">
    <location>
        <begin position="93"/>
        <end position="113"/>
    </location>
</feature>
<feature type="transmembrane region" description="Helical" evidence="2">
    <location>
        <begin position="115"/>
        <end position="135"/>
    </location>
</feature>
<feature type="transmembrane region" description="Helical" evidence="2">
    <location>
        <begin position="178"/>
        <end position="198"/>
    </location>
</feature>
<feature type="transmembrane region" description="Helical" evidence="2">
    <location>
        <begin position="206"/>
        <end position="226"/>
    </location>
</feature>
<feature type="transmembrane region" description="Helical" evidence="2">
    <location>
        <begin position="243"/>
        <end position="263"/>
    </location>
</feature>
<feature type="short sequence motif" description="Di-lysine motif" evidence="2">
    <location>
        <begin position="267"/>
        <end position="270"/>
    </location>
</feature>
<gene>
    <name evidence="3 5" type="primary">Surf4</name>
    <name type="synonym">Surf-4</name>
    <name type="ORF">CG6202</name>
</gene>
<name>SURF4_DROME</name>
<reference key="1">
    <citation type="journal article" date="1996" name="Mol. Cell. Biol.">
        <title>Surfeit locus gene homologs are widely distributed in invertebrate genomes.</title>
        <authorList>
            <person name="Armes N."/>
            <person name="Fried M."/>
        </authorList>
    </citation>
    <scope>NUCLEOTIDE SEQUENCE [MRNA]</scope>
</reference>
<reference key="2">
    <citation type="journal article" date="2000" name="Science">
        <title>The genome sequence of Drosophila melanogaster.</title>
        <authorList>
            <person name="Adams M.D."/>
            <person name="Celniker S.E."/>
            <person name="Holt R.A."/>
            <person name="Evans C.A."/>
            <person name="Gocayne J.D."/>
            <person name="Amanatides P.G."/>
            <person name="Scherer S.E."/>
            <person name="Li P.W."/>
            <person name="Hoskins R.A."/>
            <person name="Galle R.F."/>
            <person name="George R.A."/>
            <person name="Lewis S.E."/>
            <person name="Richards S."/>
            <person name="Ashburner M."/>
            <person name="Henderson S.N."/>
            <person name="Sutton G.G."/>
            <person name="Wortman J.R."/>
            <person name="Yandell M.D."/>
            <person name="Zhang Q."/>
            <person name="Chen L.X."/>
            <person name="Brandon R.C."/>
            <person name="Rogers Y.-H.C."/>
            <person name="Blazej R.G."/>
            <person name="Champe M."/>
            <person name="Pfeiffer B.D."/>
            <person name="Wan K.H."/>
            <person name="Doyle C."/>
            <person name="Baxter E.G."/>
            <person name="Helt G."/>
            <person name="Nelson C.R."/>
            <person name="Miklos G.L.G."/>
            <person name="Abril J.F."/>
            <person name="Agbayani A."/>
            <person name="An H.-J."/>
            <person name="Andrews-Pfannkoch C."/>
            <person name="Baldwin D."/>
            <person name="Ballew R.M."/>
            <person name="Basu A."/>
            <person name="Baxendale J."/>
            <person name="Bayraktaroglu L."/>
            <person name="Beasley E.M."/>
            <person name="Beeson K.Y."/>
            <person name="Benos P.V."/>
            <person name="Berman B.P."/>
            <person name="Bhandari D."/>
            <person name="Bolshakov S."/>
            <person name="Borkova D."/>
            <person name="Botchan M.R."/>
            <person name="Bouck J."/>
            <person name="Brokstein P."/>
            <person name="Brottier P."/>
            <person name="Burtis K.C."/>
            <person name="Busam D.A."/>
            <person name="Butler H."/>
            <person name="Cadieu E."/>
            <person name="Center A."/>
            <person name="Chandra I."/>
            <person name="Cherry J.M."/>
            <person name="Cawley S."/>
            <person name="Dahlke C."/>
            <person name="Davenport L.B."/>
            <person name="Davies P."/>
            <person name="de Pablos B."/>
            <person name="Delcher A."/>
            <person name="Deng Z."/>
            <person name="Mays A.D."/>
            <person name="Dew I."/>
            <person name="Dietz S.M."/>
            <person name="Dodson K."/>
            <person name="Doup L.E."/>
            <person name="Downes M."/>
            <person name="Dugan-Rocha S."/>
            <person name="Dunkov B.C."/>
            <person name="Dunn P."/>
            <person name="Durbin K.J."/>
            <person name="Evangelista C.C."/>
            <person name="Ferraz C."/>
            <person name="Ferriera S."/>
            <person name="Fleischmann W."/>
            <person name="Fosler C."/>
            <person name="Gabrielian A.E."/>
            <person name="Garg N.S."/>
            <person name="Gelbart W.M."/>
            <person name="Glasser K."/>
            <person name="Glodek A."/>
            <person name="Gong F."/>
            <person name="Gorrell J.H."/>
            <person name="Gu Z."/>
            <person name="Guan P."/>
            <person name="Harris M."/>
            <person name="Harris N.L."/>
            <person name="Harvey D.A."/>
            <person name="Heiman T.J."/>
            <person name="Hernandez J.R."/>
            <person name="Houck J."/>
            <person name="Hostin D."/>
            <person name="Houston K.A."/>
            <person name="Howland T.J."/>
            <person name="Wei M.-H."/>
            <person name="Ibegwam C."/>
            <person name="Jalali M."/>
            <person name="Kalush F."/>
            <person name="Karpen G.H."/>
            <person name="Ke Z."/>
            <person name="Kennison J.A."/>
            <person name="Ketchum K.A."/>
            <person name="Kimmel B.E."/>
            <person name="Kodira C.D."/>
            <person name="Kraft C.L."/>
            <person name="Kravitz S."/>
            <person name="Kulp D."/>
            <person name="Lai Z."/>
            <person name="Lasko P."/>
            <person name="Lei Y."/>
            <person name="Levitsky A.A."/>
            <person name="Li J.H."/>
            <person name="Li Z."/>
            <person name="Liang Y."/>
            <person name="Lin X."/>
            <person name="Liu X."/>
            <person name="Mattei B."/>
            <person name="McIntosh T.C."/>
            <person name="McLeod M.P."/>
            <person name="McPherson D."/>
            <person name="Merkulov G."/>
            <person name="Milshina N.V."/>
            <person name="Mobarry C."/>
            <person name="Morris J."/>
            <person name="Moshrefi A."/>
            <person name="Mount S.M."/>
            <person name="Moy M."/>
            <person name="Murphy B."/>
            <person name="Murphy L."/>
            <person name="Muzny D.M."/>
            <person name="Nelson D.L."/>
            <person name="Nelson D.R."/>
            <person name="Nelson K.A."/>
            <person name="Nixon K."/>
            <person name="Nusskern D.R."/>
            <person name="Pacleb J.M."/>
            <person name="Palazzolo M."/>
            <person name="Pittman G.S."/>
            <person name="Pan S."/>
            <person name="Pollard J."/>
            <person name="Puri V."/>
            <person name="Reese M.G."/>
            <person name="Reinert K."/>
            <person name="Remington K."/>
            <person name="Saunders R.D.C."/>
            <person name="Scheeler F."/>
            <person name="Shen H."/>
            <person name="Shue B.C."/>
            <person name="Siden-Kiamos I."/>
            <person name="Simpson M."/>
            <person name="Skupski M.P."/>
            <person name="Smith T.J."/>
            <person name="Spier E."/>
            <person name="Spradling A.C."/>
            <person name="Stapleton M."/>
            <person name="Strong R."/>
            <person name="Sun E."/>
            <person name="Svirskas R."/>
            <person name="Tector C."/>
            <person name="Turner R."/>
            <person name="Venter E."/>
            <person name="Wang A.H."/>
            <person name="Wang X."/>
            <person name="Wang Z.-Y."/>
            <person name="Wassarman D.A."/>
            <person name="Weinstock G.M."/>
            <person name="Weissenbach J."/>
            <person name="Williams S.M."/>
            <person name="Woodage T."/>
            <person name="Worley K.C."/>
            <person name="Wu D."/>
            <person name="Yang S."/>
            <person name="Yao Q.A."/>
            <person name="Ye J."/>
            <person name="Yeh R.-F."/>
            <person name="Zaveri J.S."/>
            <person name="Zhan M."/>
            <person name="Zhang G."/>
            <person name="Zhao Q."/>
            <person name="Zheng L."/>
            <person name="Zheng X.H."/>
            <person name="Zhong F.N."/>
            <person name="Zhong W."/>
            <person name="Zhou X."/>
            <person name="Zhu S.C."/>
            <person name="Zhu X."/>
            <person name="Smith H.O."/>
            <person name="Gibbs R.A."/>
            <person name="Myers E.W."/>
            <person name="Rubin G.M."/>
            <person name="Venter J.C."/>
        </authorList>
    </citation>
    <scope>NUCLEOTIDE SEQUENCE [LARGE SCALE GENOMIC DNA]</scope>
    <source>
        <strain>Berkeley</strain>
    </source>
</reference>
<reference key="3">
    <citation type="journal article" date="2002" name="Genome Biol.">
        <title>Annotation of the Drosophila melanogaster euchromatic genome: a systematic review.</title>
        <authorList>
            <person name="Misra S."/>
            <person name="Crosby M.A."/>
            <person name="Mungall C.J."/>
            <person name="Matthews B.B."/>
            <person name="Campbell K.S."/>
            <person name="Hradecky P."/>
            <person name="Huang Y."/>
            <person name="Kaminker J.S."/>
            <person name="Millburn G.H."/>
            <person name="Prochnik S.E."/>
            <person name="Smith C.D."/>
            <person name="Tupy J.L."/>
            <person name="Whitfield E.J."/>
            <person name="Bayraktaroglu L."/>
            <person name="Berman B.P."/>
            <person name="Bettencourt B.R."/>
            <person name="Celniker S.E."/>
            <person name="de Grey A.D.N.J."/>
            <person name="Drysdale R.A."/>
            <person name="Harris N.L."/>
            <person name="Richter J."/>
            <person name="Russo S."/>
            <person name="Schroeder A.J."/>
            <person name="Shu S.Q."/>
            <person name="Stapleton M."/>
            <person name="Yamada C."/>
            <person name="Ashburner M."/>
            <person name="Gelbart W.M."/>
            <person name="Rubin G.M."/>
            <person name="Lewis S.E."/>
        </authorList>
    </citation>
    <scope>GENOME REANNOTATION</scope>
    <source>
        <strain>Berkeley</strain>
    </source>
</reference>
<reference key="4">
    <citation type="journal article" date="2002" name="Genome Biol.">
        <title>A Drosophila full-length cDNA resource.</title>
        <authorList>
            <person name="Stapleton M."/>
            <person name="Carlson J.W."/>
            <person name="Brokstein P."/>
            <person name="Yu C."/>
            <person name="Champe M."/>
            <person name="George R.A."/>
            <person name="Guarin H."/>
            <person name="Kronmiller B."/>
            <person name="Pacleb J.M."/>
            <person name="Park S."/>
            <person name="Wan K.H."/>
            <person name="Rubin G.M."/>
            <person name="Celniker S.E."/>
        </authorList>
    </citation>
    <scope>NUCLEOTIDE SEQUENCE [LARGE SCALE MRNA]</scope>
    <source>
        <strain>Berkeley</strain>
        <tissue>Embryo</tissue>
    </source>
</reference>